<sequence>MSYGPLDMYRNPGPSGPQPRDFNSIIQTCSGNIQRISQATAQIKNLMSQLGTKQDSSKLQENLQQLQHSTNQLAKETNELLKELGSLPLPLSASEQRQQKLQKERLMNDFSSALNNFQVVQRKVSEKEKESIARARAGSRLSAEDRQREEQLVSFDSHEEWNQMQSQEEEAAITEQDLELIKERETAIRQLEADILDVNQIFKDLAMMIHDQGDLIDSIEANVESSEVHVERATDQLQRAAYYQKKSRKKMCILVLVLSVIVTVLVVVIWVASK</sequence>
<evidence type="ECO:0000250" key="1"/>
<evidence type="ECO:0000250" key="2">
    <source>
        <dbReference type="UniProtKB" id="G3V7P1"/>
    </source>
</evidence>
<evidence type="ECO:0000250" key="3">
    <source>
        <dbReference type="UniProtKB" id="Q86Y82"/>
    </source>
</evidence>
<evidence type="ECO:0000255" key="4"/>
<evidence type="ECO:0000255" key="5">
    <source>
        <dbReference type="PROSITE-ProRule" id="PRU00202"/>
    </source>
</evidence>
<evidence type="ECO:0000256" key="6">
    <source>
        <dbReference type="SAM" id="MobiDB-lite"/>
    </source>
</evidence>
<evidence type="ECO:0000269" key="7">
    <source>
    </source>
</evidence>
<evidence type="ECO:0000269" key="8">
    <source>
    </source>
</evidence>
<evidence type="ECO:0000269" key="9">
    <source>
    </source>
</evidence>
<evidence type="ECO:0000305" key="10"/>
<evidence type="ECO:0007744" key="11">
    <source>
    </source>
</evidence>
<feature type="initiator methionine" description="Removed" evidence="3">
    <location>
        <position position="1"/>
    </location>
</feature>
<feature type="chain" id="PRO_0000210224" description="Syntaxin-12">
    <location>
        <begin position="2"/>
        <end position="274"/>
    </location>
</feature>
<feature type="topological domain" description="Cytoplasmic" evidence="4">
    <location>
        <begin position="2"/>
        <end position="250"/>
    </location>
</feature>
<feature type="transmembrane region" description="Helical; Anchor for type IV membrane protein" evidence="4">
    <location>
        <begin position="251"/>
        <end position="271"/>
    </location>
</feature>
<feature type="topological domain" description="Vesicular" evidence="4">
    <location>
        <begin position="272"/>
        <end position="274"/>
    </location>
</feature>
<feature type="domain" description="t-SNARE coiled-coil homology" evidence="5">
    <location>
        <begin position="178"/>
        <end position="240"/>
    </location>
</feature>
<feature type="region of interest" description="Disordered" evidence="6">
    <location>
        <begin position="1"/>
        <end position="20"/>
    </location>
</feature>
<feature type="region of interest" description="Disordered" evidence="6">
    <location>
        <begin position="128"/>
        <end position="147"/>
    </location>
</feature>
<feature type="coiled-coil region" evidence="4">
    <location>
        <begin position="33"/>
        <end position="130"/>
    </location>
</feature>
<feature type="modified residue" description="N-acetylserine" evidence="3">
    <location>
        <position position="2"/>
    </location>
</feature>
<feature type="modified residue" description="Phosphoserine" evidence="11">
    <location>
        <position position="139"/>
    </location>
</feature>
<feature type="modified residue" description="Phosphoserine" evidence="11">
    <location>
        <position position="142"/>
    </location>
</feature>
<feature type="modified residue" description="Phosphoserine" evidence="11">
    <location>
        <position position="218"/>
    </location>
</feature>
<feature type="modified residue" description="Phosphoserine" evidence="11">
    <location>
        <position position="225"/>
    </location>
</feature>
<feature type="sequence conflict" description="In Ref. 3; AAH10669." evidence="10" ref="3">
    <original>A</original>
    <variation>V</variation>
    <location>
        <position position="171"/>
    </location>
</feature>
<gene>
    <name type="primary">Stx12</name>
</gene>
<keyword id="KW-0007">Acetylation</keyword>
<keyword id="KW-0175">Coiled coil</keyword>
<keyword id="KW-0967">Endosome</keyword>
<keyword id="KW-0333">Golgi apparatus</keyword>
<keyword id="KW-0472">Membrane</keyword>
<keyword id="KW-0597">Phosphoprotein</keyword>
<keyword id="KW-0653">Protein transport</keyword>
<keyword id="KW-1185">Reference proteome</keyword>
<keyword id="KW-0812">Transmembrane</keyword>
<keyword id="KW-1133">Transmembrane helix</keyword>
<keyword id="KW-0813">Transport</keyword>
<name>STX12_MOUSE</name>
<accession>Q9ER00</accession>
<accession>Q3UIV9</accession>
<accession>Q921T9</accession>
<reference key="1">
    <citation type="submission" date="1998-10" db="EMBL/GenBank/DDBJ databases">
        <title>Mouse syntaxin12.</title>
        <authorList>
            <person name="Nakamura N."/>
            <person name="Wada Y."/>
            <person name="Futai M."/>
        </authorList>
    </citation>
    <scope>NUCLEOTIDE SEQUENCE [MRNA]</scope>
    <source>
        <strain>C57BL/6J</strain>
    </source>
</reference>
<reference key="2">
    <citation type="journal article" date="2005" name="Science">
        <title>The transcriptional landscape of the mammalian genome.</title>
        <authorList>
            <person name="Carninci P."/>
            <person name="Kasukawa T."/>
            <person name="Katayama S."/>
            <person name="Gough J."/>
            <person name="Frith M.C."/>
            <person name="Maeda N."/>
            <person name="Oyama R."/>
            <person name="Ravasi T."/>
            <person name="Lenhard B."/>
            <person name="Wells C."/>
            <person name="Kodzius R."/>
            <person name="Shimokawa K."/>
            <person name="Bajic V.B."/>
            <person name="Brenner S.E."/>
            <person name="Batalov S."/>
            <person name="Forrest A.R."/>
            <person name="Zavolan M."/>
            <person name="Davis M.J."/>
            <person name="Wilming L.G."/>
            <person name="Aidinis V."/>
            <person name="Allen J.E."/>
            <person name="Ambesi-Impiombato A."/>
            <person name="Apweiler R."/>
            <person name="Aturaliya R.N."/>
            <person name="Bailey T.L."/>
            <person name="Bansal M."/>
            <person name="Baxter L."/>
            <person name="Beisel K.W."/>
            <person name="Bersano T."/>
            <person name="Bono H."/>
            <person name="Chalk A.M."/>
            <person name="Chiu K.P."/>
            <person name="Choudhary V."/>
            <person name="Christoffels A."/>
            <person name="Clutterbuck D.R."/>
            <person name="Crowe M.L."/>
            <person name="Dalla E."/>
            <person name="Dalrymple B.P."/>
            <person name="de Bono B."/>
            <person name="Della Gatta G."/>
            <person name="di Bernardo D."/>
            <person name="Down T."/>
            <person name="Engstrom P."/>
            <person name="Fagiolini M."/>
            <person name="Faulkner G."/>
            <person name="Fletcher C.F."/>
            <person name="Fukushima T."/>
            <person name="Furuno M."/>
            <person name="Futaki S."/>
            <person name="Gariboldi M."/>
            <person name="Georgii-Hemming P."/>
            <person name="Gingeras T.R."/>
            <person name="Gojobori T."/>
            <person name="Green R.E."/>
            <person name="Gustincich S."/>
            <person name="Harbers M."/>
            <person name="Hayashi Y."/>
            <person name="Hensch T.K."/>
            <person name="Hirokawa N."/>
            <person name="Hill D."/>
            <person name="Huminiecki L."/>
            <person name="Iacono M."/>
            <person name="Ikeo K."/>
            <person name="Iwama A."/>
            <person name="Ishikawa T."/>
            <person name="Jakt M."/>
            <person name="Kanapin A."/>
            <person name="Katoh M."/>
            <person name="Kawasawa Y."/>
            <person name="Kelso J."/>
            <person name="Kitamura H."/>
            <person name="Kitano H."/>
            <person name="Kollias G."/>
            <person name="Krishnan S.P."/>
            <person name="Kruger A."/>
            <person name="Kummerfeld S.K."/>
            <person name="Kurochkin I.V."/>
            <person name="Lareau L.F."/>
            <person name="Lazarevic D."/>
            <person name="Lipovich L."/>
            <person name="Liu J."/>
            <person name="Liuni S."/>
            <person name="McWilliam S."/>
            <person name="Madan Babu M."/>
            <person name="Madera M."/>
            <person name="Marchionni L."/>
            <person name="Matsuda H."/>
            <person name="Matsuzawa S."/>
            <person name="Miki H."/>
            <person name="Mignone F."/>
            <person name="Miyake S."/>
            <person name="Morris K."/>
            <person name="Mottagui-Tabar S."/>
            <person name="Mulder N."/>
            <person name="Nakano N."/>
            <person name="Nakauchi H."/>
            <person name="Ng P."/>
            <person name="Nilsson R."/>
            <person name="Nishiguchi S."/>
            <person name="Nishikawa S."/>
            <person name="Nori F."/>
            <person name="Ohara O."/>
            <person name="Okazaki Y."/>
            <person name="Orlando V."/>
            <person name="Pang K.C."/>
            <person name="Pavan W.J."/>
            <person name="Pavesi G."/>
            <person name="Pesole G."/>
            <person name="Petrovsky N."/>
            <person name="Piazza S."/>
            <person name="Reed J."/>
            <person name="Reid J.F."/>
            <person name="Ring B.Z."/>
            <person name="Ringwald M."/>
            <person name="Rost B."/>
            <person name="Ruan Y."/>
            <person name="Salzberg S.L."/>
            <person name="Sandelin A."/>
            <person name="Schneider C."/>
            <person name="Schoenbach C."/>
            <person name="Sekiguchi K."/>
            <person name="Semple C.A."/>
            <person name="Seno S."/>
            <person name="Sessa L."/>
            <person name="Sheng Y."/>
            <person name="Shibata Y."/>
            <person name="Shimada H."/>
            <person name="Shimada K."/>
            <person name="Silva D."/>
            <person name="Sinclair B."/>
            <person name="Sperling S."/>
            <person name="Stupka E."/>
            <person name="Sugiura K."/>
            <person name="Sultana R."/>
            <person name="Takenaka Y."/>
            <person name="Taki K."/>
            <person name="Tammoja K."/>
            <person name="Tan S.L."/>
            <person name="Tang S."/>
            <person name="Taylor M.S."/>
            <person name="Tegner J."/>
            <person name="Teichmann S.A."/>
            <person name="Ueda H.R."/>
            <person name="van Nimwegen E."/>
            <person name="Verardo R."/>
            <person name="Wei C.L."/>
            <person name="Yagi K."/>
            <person name="Yamanishi H."/>
            <person name="Zabarovsky E."/>
            <person name="Zhu S."/>
            <person name="Zimmer A."/>
            <person name="Hide W."/>
            <person name="Bult C."/>
            <person name="Grimmond S.M."/>
            <person name="Teasdale R.D."/>
            <person name="Liu E.T."/>
            <person name="Brusic V."/>
            <person name="Quackenbush J."/>
            <person name="Wahlestedt C."/>
            <person name="Mattick J.S."/>
            <person name="Hume D.A."/>
            <person name="Kai C."/>
            <person name="Sasaki D."/>
            <person name="Tomaru Y."/>
            <person name="Fukuda S."/>
            <person name="Kanamori-Katayama M."/>
            <person name="Suzuki M."/>
            <person name="Aoki J."/>
            <person name="Arakawa T."/>
            <person name="Iida J."/>
            <person name="Imamura K."/>
            <person name="Itoh M."/>
            <person name="Kato T."/>
            <person name="Kawaji H."/>
            <person name="Kawagashira N."/>
            <person name="Kawashima T."/>
            <person name="Kojima M."/>
            <person name="Kondo S."/>
            <person name="Konno H."/>
            <person name="Nakano K."/>
            <person name="Ninomiya N."/>
            <person name="Nishio T."/>
            <person name="Okada M."/>
            <person name="Plessy C."/>
            <person name="Shibata K."/>
            <person name="Shiraki T."/>
            <person name="Suzuki S."/>
            <person name="Tagami M."/>
            <person name="Waki K."/>
            <person name="Watahiki A."/>
            <person name="Okamura-Oho Y."/>
            <person name="Suzuki H."/>
            <person name="Kawai J."/>
            <person name="Hayashizaki Y."/>
        </authorList>
    </citation>
    <scope>NUCLEOTIDE SEQUENCE [LARGE SCALE MRNA]</scope>
    <source>
        <strain>C57BL/6J</strain>
        <tissue>Amnion</tissue>
        <tissue>Cecum</tissue>
        <tissue>Kidney</tissue>
    </source>
</reference>
<reference key="3">
    <citation type="journal article" date="2004" name="Genome Res.">
        <title>The status, quality, and expansion of the NIH full-length cDNA project: the Mammalian Gene Collection (MGC).</title>
        <authorList>
            <consortium name="The MGC Project Team"/>
        </authorList>
    </citation>
    <scope>NUCLEOTIDE SEQUENCE [LARGE SCALE MRNA]</scope>
</reference>
<reference key="4">
    <citation type="journal article" date="2002" name="J. Cell Biol.">
        <title>Modulation of receptor cycling by neuron-enriched endosomal protein of 21 kD.</title>
        <authorList>
            <person name="Steiner P."/>
            <person name="Sarria J.C."/>
            <person name="Glauser L."/>
            <person name="Magnin S."/>
            <person name="Catsicas S."/>
            <person name="Hirling H."/>
        </authorList>
    </citation>
    <scope>INTERACTION WITH NSG1</scope>
</reference>
<reference key="5">
    <citation type="journal article" date="2009" name="Immunity">
        <title>The phagosomal proteome in interferon-gamma-activated macrophages.</title>
        <authorList>
            <person name="Trost M."/>
            <person name="English L."/>
            <person name="Lemieux S."/>
            <person name="Courcelles M."/>
            <person name="Desjardins M."/>
            <person name="Thibault P."/>
        </authorList>
    </citation>
    <scope>PHOSPHORYLATION [LARGE SCALE ANALYSIS] AT SER-139; SER-142; SER-218 AND SER-225</scope>
    <scope>IDENTIFICATION BY MASS SPECTROMETRY [LARGE SCALE ANALYSIS]</scope>
</reference>
<reference key="6">
    <citation type="journal article" date="2010" name="Cell">
        <title>A tissue-specific atlas of mouse protein phosphorylation and expression.</title>
        <authorList>
            <person name="Huttlin E.L."/>
            <person name="Jedrychowski M.P."/>
            <person name="Elias J.E."/>
            <person name="Goswami T."/>
            <person name="Rad R."/>
            <person name="Beausoleil S.A."/>
            <person name="Villen J."/>
            <person name="Haas W."/>
            <person name="Sowa M.E."/>
            <person name="Gygi S.P."/>
        </authorList>
    </citation>
    <scope>IDENTIFICATION BY MASS SPECTROMETRY [LARGE SCALE ANALYSIS]</scope>
    <source>
        <tissue>Brain</tissue>
        <tissue>Brown adipose tissue</tissue>
        <tissue>Heart</tissue>
        <tissue>Kidney</tissue>
        <tissue>Liver</tissue>
        <tissue>Lung</tissue>
        <tissue>Pancreas</tissue>
        <tissue>Spleen</tissue>
        <tissue>Testis</tissue>
    </source>
</reference>
<reference key="7">
    <citation type="journal article" date="2010" name="PLoS Biol.">
        <title>Neuron specific Rab4 effector GRASP-1 coordinates membrane specialization and maturation of recycling endosomes.</title>
        <authorList>
            <person name="Hoogenraad C.C."/>
            <person name="Popa I."/>
            <person name="Futai K."/>
            <person name="Martinez-Sanchez E."/>
            <person name="Sanchez-Martinez E."/>
            <person name="Wulf P.S."/>
            <person name="van Vlijmen T."/>
            <person name="Dortland B.R."/>
            <person name="Oorschot V."/>
            <person name="Govers R."/>
            <person name="Monti M."/>
            <person name="Heck A.J."/>
            <person name="Sheng M."/>
            <person name="Klumperman J."/>
            <person name="Rehmann H."/>
            <person name="Jaarsma D."/>
            <person name="Kapitein L.C."/>
            <person name="van der Sluijs P."/>
        </authorList>
    </citation>
    <scope>INTERACTION WITH GRIPAP1</scope>
</reference>
<reference key="8">
    <citation type="journal article" date="2017" name="Sci. Rep.">
        <title>The two-pore channel TPC1 is required for efficient protein processing through early and recycling endosomes.</title>
        <authorList>
            <person name="Castonguay J."/>
            <person name="Orth J.H.C."/>
            <person name="Mueller T."/>
            <person name="Sleman F."/>
            <person name="Grimm C."/>
            <person name="Wahl-Schott C."/>
            <person name="Biel M."/>
            <person name="Mallmann R.T."/>
            <person name="Bildl W."/>
            <person name="Schulte U."/>
            <person name="Klugbauer N."/>
        </authorList>
    </citation>
    <scope>INTERACTION WITH TPC1</scope>
</reference>
<proteinExistence type="evidence at protein level"/>
<dbReference type="EMBL" id="AB019211">
    <property type="protein sequence ID" value="BAB20282.1"/>
    <property type="molecule type" value="mRNA"/>
</dbReference>
<dbReference type="EMBL" id="AK077678">
    <property type="protein sequence ID" value="BAC36951.1"/>
    <property type="molecule type" value="mRNA"/>
</dbReference>
<dbReference type="EMBL" id="AK078948">
    <property type="protein sequence ID" value="BAC37473.1"/>
    <property type="molecule type" value="mRNA"/>
</dbReference>
<dbReference type="EMBL" id="AK146544">
    <property type="protein sequence ID" value="BAE27249.1"/>
    <property type="molecule type" value="mRNA"/>
</dbReference>
<dbReference type="EMBL" id="AK146735">
    <property type="protein sequence ID" value="BAE27397.1"/>
    <property type="molecule type" value="mRNA"/>
</dbReference>
<dbReference type="EMBL" id="AK167087">
    <property type="protein sequence ID" value="BAE39244.1"/>
    <property type="molecule type" value="mRNA"/>
</dbReference>
<dbReference type="EMBL" id="BC010669">
    <property type="protein sequence ID" value="AAH10669.1"/>
    <property type="molecule type" value="mRNA"/>
</dbReference>
<dbReference type="CCDS" id="CCDS18737.1"/>
<dbReference type="RefSeq" id="NP_598648.1">
    <property type="nucleotide sequence ID" value="NM_133887.5"/>
</dbReference>
<dbReference type="SMR" id="Q9ER00"/>
<dbReference type="BioGRID" id="221409">
    <property type="interactions" value="21"/>
</dbReference>
<dbReference type="FunCoup" id="Q9ER00">
    <property type="interactions" value="3684"/>
</dbReference>
<dbReference type="IntAct" id="Q9ER00">
    <property type="interactions" value="6"/>
</dbReference>
<dbReference type="STRING" id="10090.ENSMUSP00000030698"/>
<dbReference type="iPTMnet" id="Q9ER00"/>
<dbReference type="PhosphoSitePlus" id="Q9ER00"/>
<dbReference type="SwissPalm" id="Q9ER00"/>
<dbReference type="jPOST" id="Q9ER00"/>
<dbReference type="PaxDb" id="10090-ENSMUSP00000030698"/>
<dbReference type="PeptideAtlas" id="Q9ER00"/>
<dbReference type="ProteomicsDB" id="254607"/>
<dbReference type="Pumba" id="Q9ER00"/>
<dbReference type="Antibodypedia" id="30837">
    <property type="antibodies" value="188 antibodies from 28 providers"/>
</dbReference>
<dbReference type="DNASU" id="100226"/>
<dbReference type="Ensembl" id="ENSMUST00000030698.5">
    <property type="protein sequence ID" value="ENSMUSP00000030698.5"/>
    <property type="gene ID" value="ENSMUSG00000028879.5"/>
</dbReference>
<dbReference type="GeneID" id="100226"/>
<dbReference type="KEGG" id="mmu:100226"/>
<dbReference type="UCSC" id="uc008vbx.1">
    <property type="organism name" value="mouse"/>
</dbReference>
<dbReference type="AGR" id="MGI:1931027"/>
<dbReference type="CTD" id="23673"/>
<dbReference type="MGI" id="MGI:1931027">
    <property type="gene designation" value="Stx12"/>
</dbReference>
<dbReference type="VEuPathDB" id="HostDB:ENSMUSG00000028879"/>
<dbReference type="eggNOG" id="KOG0811">
    <property type="taxonomic scope" value="Eukaryota"/>
</dbReference>
<dbReference type="GeneTree" id="ENSGT01000000214440"/>
<dbReference type="HOGENOM" id="CLU_059257_1_1_1"/>
<dbReference type="InParanoid" id="Q9ER00"/>
<dbReference type="OMA" id="QPFLMEQ"/>
<dbReference type="OrthoDB" id="364348at2759"/>
<dbReference type="PhylomeDB" id="Q9ER00"/>
<dbReference type="TreeFam" id="TF315607"/>
<dbReference type="BioGRID-ORCS" id="100226">
    <property type="hits" value="2 hits in 80 CRISPR screens"/>
</dbReference>
<dbReference type="CD-CODE" id="CE726F99">
    <property type="entry name" value="Postsynaptic density"/>
</dbReference>
<dbReference type="ChiTaRS" id="Stx12">
    <property type="organism name" value="mouse"/>
</dbReference>
<dbReference type="PRO" id="PR:Q9ER00"/>
<dbReference type="Proteomes" id="UP000000589">
    <property type="component" value="Chromosome 4"/>
</dbReference>
<dbReference type="RNAct" id="Q9ER00">
    <property type="molecule type" value="protein"/>
</dbReference>
<dbReference type="Bgee" id="ENSMUSG00000028879">
    <property type="expression patterns" value="Expressed in urinary bladder urothelium and 273 other cell types or tissues"/>
</dbReference>
<dbReference type="GO" id="GO:0031083">
    <property type="term" value="C:BLOC-1 complex"/>
    <property type="evidence" value="ECO:0007669"/>
    <property type="project" value="Ensembl"/>
</dbReference>
<dbReference type="GO" id="GO:0031901">
    <property type="term" value="C:early endosome membrane"/>
    <property type="evidence" value="ECO:0007669"/>
    <property type="project" value="UniProtKB-SubCell"/>
</dbReference>
<dbReference type="GO" id="GO:0000139">
    <property type="term" value="C:Golgi membrane"/>
    <property type="evidence" value="ECO:0007669"/>
    <property type="project" value="UniProtKB-SubCell"/>
</dbReference>
<dbReference type="GO" id="GO:0045121">
    <property type="term" value="C:membrane raft"/>
    <property type="evidence" value="ECO:0007669"/>
    <property type="project" value="Ensembl"/>
</dbReference>
<dbReference type="GO" id="GO:0005654">
    <property type="term" value="C:nucleoplasm"/>
    <property type="evidence" value="ECO:0007669"/>
    <property type="project" value="Ensembl"/>
</dbReference>
<dbReference type="GO" id="GO:0045335">
    <property type="term" value="C:phagocytic vesicle"/>
    <property type="evidence" value="ECO:0007669"/>
    <property type="project" value="Ensembl"/>
</dbReference>
<dbReference type="GO" id="GO:0000407">
    <property type="term" value="C:phagophore assembly site"/>
    <property type="evidence" value="ECO:0007669"/>
    <property type="project" value="Ensembl"/>
</dbReference>
<dbReference type="GO" id="GO:0055037">
    <property type="term" value="C:recycling endosome"/>
    <property type="evidence" value="ECO:0000250"/>
    <property type="project" value="UniProtKB"/>
</dbReference>
<dbReference type="GO" id="GO:0055038">
    <property type="term" value="C:recycling endosome membrane"/>
    <property type="evidence" value="ECO:0007669"/>
    <property type="project" value="UniProtKB-SubCell"/>
</dbReference>
<dbReference type="GO" id="GO:0031201">
    <property type="term" value="C:SNARE complex"/>
    <property type="evidence" value="ECO:0000250"/>
    <property type="project" value="UniProtKB"/>
</dbReference>
<dbReference type="GO" id="GO:0005484">
    <property type="term" value="F:SNAP receptor activity"/>
    <property type="evidence" value="ECO:0007669"/>
    <property type="project" value="InterPro"/>
</dbReference>
<dbReference type="GO" id="GO:0000045">
    <property type="term" value="P:autophagosome assembly"/>
    <property type="evidence" value="ECO:0007669"/>
    <property type="project" value="Ensembl"/>
</dbReference>
<dbReference type="GO" id="GO:0033344">
    <property type="term" value="P:cholesterol efflux"/>
    <property type="evidence" value="ECO:0007669"/>
    <property type="project" value="Ensembl"/>
</dbReference>
<dbReference type="GO" id="GO:0032456">
    <property type="term" value="P:endocytic recycling"/>
    <property type="evidence" value="ECO:0000250"/>
    <property type="project" value="UniProtKB"/>
</dbReference>
<dbReference type="GO" id="GO:0006886">
    <property type="term" value="P:intracellular protein transport"/>
    <property type="evidence" value="ECO:0007669"/>
    <property type="project" value="InterPro"/>
</dbReference>
<dbReference type="GO" id="GO:0050821">
    <property type="term" value="P:protein stabilization"/>
    <property type="evidence" value="ECO:0007669"/>
    <property type="project" value="Ensembl"/>
</dbReference>
<dbReference type="CDD" id="cd15876">
    <property type="entry name" value="SNARE_syntaxin12"/>
    <property type="match status" value="1"/>
</dbReference>
<dbReference type="CDD" id="cd00179">
    <property type="entry name" value="SynN"/>
    <property type="match status" value="1"/>
</dbReference>
<dbReference type="FunFam" id="1.20.5.110:FF:000016">
    <property type="entry name" value="Syntaxin 12"/>
    <property type="match status" value="1"/>
</dbReference>
<dbReference type="FunFam" id="1.20.58.70:FF:000009">
    <property type="entry name" value="Syntaxin 12"/>
    <property type="match status" value="1"/>
</dbReference>
<dbReference type="Gene3D" id="1.20.5.110">
    <property type="match status" value="1"/>
</dbReference>
<dbReference type="Gene3D" id="1.20.58.70">
    <property type="match status" value="1"/>
</dbReference>
<dbReference type="InterPro" id="IPR010989">
    <property type="entry name" value="SNARE"/>
</dbReference>
<dbReference type="InterPro" id="IPR045242">
    <property type="entry name" value="Syntaxin"/>
</dbReference>
<dbReference type="InterPro" id="IPR006012">
    <property type="entry name" value="Syntaxin/epimorphin_CS"/>
</dbReference>
<dbReference type="InterPro" id="IPR006011">
    <property type="entry name" value="Syntaxin_N"/>
</dbReference>
<dbReference type="InterPro" id="IPR000727">
    <property type="entry name" value="T_SNARE_dom"/>
</dbReference>
<dbReference type="PANTHER" id="PTHR19957">
    <property type="entry name" value="SYNTAXIN"/>
    <property type="match status" value="1"/>
</dbReference>
<dbReference type="PANTHER" id="PTHR19957:SF88">
    <property type="entry name" value="SYNTAXIN-12"/>
    <property type="match status" value="1"/>
</dbReference>
<dbReference type="Pfam" id="PF05739">
    <property type="entry name" value="SNARE"/>
    <property type="match status" value="1"/>
</dbReference>
<dbReference type="Pfam" id="PF14523">
    <property type="entry name" value="Syntaxin_2"/>
    <property type="match status" value="1"/>
</dbReference>
<dbReference type="SMART" id="SM00503">
    <property type="entry name" value="SynN"/>
    <property type="match status" value="1"/>
</dbReference>
<dbReference type="SMART" id="SM00397">
    <property type="entry name" value="t_SNARE"/>
    <property type="match status" value="1"/>
</dbReference>
<dbReference type="SUPFAM" id="SSF47661">
    <property type="entry name" value="t-snare proteins"/>
    <property type="match status" value="1"/>
</dbReference>
<dbReference type="PROSITE" id="PS00914">
    <property type="entry name" value="SYNTAXIN"/>
    <property type="match status" value="1"/>
</dbReference>
<dbReference type="PROSITE" id="PS50192">
    <property type="entry name" value="T_SNARE"/>
    <property type="match status" value="1"/>
</dbReference>
<protein>
    <recommendedName>
        <fullName>Syntaxin-12</fullName>
    </recommendedName>
</protein>
<organism>
    <name type="scientific">Mus musculus</name>
    <name type="common">Mouse</name>
    <dbReference type="NCBI Taxonomy" id="10090"/>
    <lineage>
        <taxon>Eukaryota</taxon>
        <taxon>Metazoa</taxon>
        <taxon>Chordata</taxon>
        <taxon>Craniata</taxon>
        <taxon>Vertebrata</taxon>
        <taxon>Euteleostomi</taxon>
        <taxon>Mammalia</taxon>
        <taxon>Eutheria</taxon>
        <taxon>Euarchontoglires</taxon>
        <taxon>Glires</taxon>
        <taxon>Rodentia</taxon>
        <taxon>Myomorpha</taxon>
        <taxon>Muroidea</taxon>
        <taxon>Muridae</taxon>
        <taxon>Murinae</taxon>
        <taxon>Mus</taxon>
        <taxon>Mus</taxon>
    </lineage>
</organism>
<comment type="function">
    <text evidence="2">SNARE promoting fusion of transport vesicles with target membranes. Together with SNARE STX6, promotes movement of vesicles from endosomes to the cell membrane, and may therefore function in the endocytic recycling pathway. Through complex formation with GRIP1, GRIA2 and NSG1 controls the intracellular fate of AMPAR and the endosomal sorting of the GRIA2 subunit toward recycling and membrane targeting.</text>
</comment>
<comment type="subunit">
    <text evidence="1 2 7 8 9">Associates with the BLOC-1 complex. Interacts with BLOC1S6. Interacts with NAPA and SNAP23. Identified in a complex containing STX6, STX12, VAMP4 and VTI1A (By similarity). Interacts with GRIPAP1 (PubMed:20098723). Forms a complex with GRIP1, GRIA2 and NSG1; controls the intracellular fate of AMPAR and the endosomal sorting of the GRIA2 subunit toward recycling and membrane targeting (By similarity). Interacts with NSG1 (PubMed:12070131). Interacts with TPC1 (PubMed:28855648). Interacts (via N-terminus) with VPS13B (By similarity).</text>
</comment>
<comment type="subcellular location">
    <subcellularLocation>
        <location evidence="2">Endosome membrane</location>
        <topology evidence="2">Single-pass type IV membrane protein</topology>
    </subcellularLocation>
    <subcellularLocation>
        <location evidence="2">Golgi apparatus membrane</location>
        <topology evidence="2">Single-pass type IV membrane protein</topology>
    </subcellularLocation>
    <subcellularLocation>
        <location evidence="2">Endomembrane system</location>
        <topology evidence="2">Single-pass type IV membrane protein</topology>
        <orientation evidence="2">Cytoplasmic side</orientation>
    </subcellularLocation>
    <subcellularLocation>
        <location evidence="2">Early endosome membrane</location>
        <topology evidence="2">Single-pass type IV membrane protein</topology>
    </subcellularLocation>
    <subcellularLocation>
        <location evidence="2">Recycling endosome membrane</location>
        <topology evidence="2">Single-pass type IV membrane protein</topology>
    </subcellularLocation>
</comment>
<comment type="similarity">
    <text evidence="10">Belongs to the syntaxin family.</text>
</comment>